<protein>
    <recommendedName>
        <fullName evidence="1">Protein translocase subunit SecA</fullName>
        <ecNumber evidence="1">7.4.2.8</ecNumber>
    </recommendedName>
</protein>
<name>SECA_CHLTR</name>
<dbReference type="EC" id="7.4.2.8" evidence="1"/>
<dbReference type="EMBL" id="AE001273">
    <property type="protein sequence ID" value="AAC68296.1"/>
    <property type="molecule type" value="Genomic_DNA"/>
</dbReference>
<dbReference type="PIR" id="G71482">
    <property type="entry name" value="G71482"/>
</dbReference>
<dbReference type="RefSeq" id="WP_010725308.1">
    <property type="nucleotide sequence ID" value="NC_000117.1"/>
</dbReference>
<dbReference type="SMR" id="O84707"/>
<dbReference type="FunCoup" id="O84707">
    <property type="interactions" value="281"/>
</dbReference>
<dbReference type="STRING" id="272561.CT_701"/>
<dbReference type="EnsemblBacteria" id="AAC68296">
    <property type="protein sequence ID" value="AAC68296"/>
    <property type="gene ID" value="CT_701"/>
</dbReference>
<dbReference type="KEGG" id="ctr:CT_701"/>
<dbReference type="PATRIC" id="fig|272561.5.peg.772"/>
<dbReference type="HOGENOM" id="CLU_005314_0_0_0"/>
<dbReference type="InParanoid" id="O84707"/>
<dbReference type="OrthoDB" id="9805579at2"/>
<dbReference type="Proteomes" id="UP000000431">
    <property type="component" value="Chromosome"/>
</dbReference>
<dbReference type="GO" id="GO:0031522">
    <property type="term" value="C:cell envelope Sec protein transport complex"/>
    <property type="evidence" value="ECO:0000318"/>
    <property type="project" value="GO_Central"/>
</dbReference>
<dbReference type="GO" id="GO:0005737">
    <property type="term" value="C:cytoplasm"/>
    <property type="evidence" value="ECO:0007669"/>
    <property type="project" value="UniProtKB-SubCell"/>
</dbReference>
<dbReference type="GO" id="GO:0005886">
    <property type="term" value="C:plasma membrane"/>
    <property type="evidence" value="ECO:0000318"/>
    <property type="project" value="GO_Central"/>
</dbReference>
<dbReference type="GO" id="GO:0005524">
    <property type="term" value="F:ATP binding"/>
    <property type="evidence" value="ECO:0000318"/>
    <property type="project" value="GO_Central"/>
</dbReference>
<dbReference type="GO" id="GO:0008564">
    <property type="term" value="F:protein-exporting ATPase activity"/>
    <property type="evidence" value="ECO:0007669"/>
    <property type="project" value="UniProtKB-EC"/>
</dbReference>
<dbReference type="GO" id="GO:0065002">
    <property type="term" value="P:intracellular protein transmembrane transport"/>
    <property type="evidence" value="ECO:0007669"/>
    <property type="project" value="UniProtKB-UniRule"/>
</dbReference>
<dbReference type="GO" id="GO:0017038">
    <property type="term" value="P:protein import"/>
    <property type="evidence" value="ECO:0007669"/>
    <property type="project" value="InterPro"/>
</dbReference>
<dbReference type="GO" id="GO:0006605">
    <property type="term" value="P:protein targeting"/>
    <property type="evidence" value="ECO:0007669"/>
    <property type="project" value="UniProtKB-UniRule"/>
</dbReference>
<dbReference type="GO" id="GO:0043952">
    <property type="term" value="P:protein transport by the Sec complex"/>
    <property type="evidence" value="ECO:0000318"/>
    <property type="project" value="GO_Central"/>
</dbReference>
<dbReference type="CDD" id="cd17928">
    <property type="entry name" value="DEXDc_SecA"/>
    <property type="match status" value="1"/>
</dbReference>
<dbReference type="CDD" id="cd18803">
    <property type="entry name" value="SF2_C_secA"/>
    <property type="match status" value="1"/>
</dbReference>
<dbReference type="FunFam" id="3.40.50.300:FF:000694">
    <property type="entry name" value="Preprotein translocase subunit SecA"/>
    <property type="match status" value="1"/>
</dbReference>
<dbReference type="FunFam" id="1.10.3060.10:FF:000011">
    <property type="entry name" value="Protein translocase subunit SecA"/>
    <property type="match status" value="1"/>
</dbReference>
<dbReference type="FunFam" id="3.40.50.300:FF:000787">
    <property type="entry name" value="Protein translocase subunit SecA"/>
    <property type="match status" value="1"/>
</dbReference>
<dbReference type="Gene3D" id="1.10.3060.10">
    <property type="entry name" value="Helical scaffold and wing domains of SecA"/>
    <property type="match status" value="1"/>
</dbReference>
<dbReference type="Gene3D" id="3.40.50.300">
    <property type="entry name" value="P-loop containing nucleotide triphosphate hydrolases"/>
    <property type="match status" value="3"/>
</dbReference>
<dbReference type="Gene3D" id="3.90.1440.10">
    <property type="entry name" value="SecA, preprotein cross-linking domain"/>
    <property type="match status" value="1"/>
</dbReference>
<dbReference type="HAMAP" id="MF_01382">
    <property type="entry name" value="SecA"/>
    <property type="match status" value="1"/>
</dbReference>
<dbReference type="InterPro" id="IPR014001">
    <property type="entry name" value="Helicase_ATP-bd"/>
</dbReference>
<dbReference type="InterPro" id="IPR001650">
    <property type="entry name" value="Helicase_C-like"/>
</dbReference>
<dbReference type="InterPro" id="IPR027417">
    <property type="entry name" value="P-loop_NTPase"/>
</dbReference>
<dbReference type="InterPro" id="IPR000185">
    <property type="entry name" value="SecA"/>
</dbReference>
<dbReference type="InterPro" id="IPR020937">
    <property type="entry name" value="SecA_CS"/>
</dbReference>
<dbReference type="InterPro" id="IPR011115">
    <property type="entry name" value="SecA_DEAD"/>
</dbReference>
<dbReference type="InterPro" id="IPR014018">
    <property type="entry name" value="SecA_motor_DEAD"/>
</dbReference>
<dbReference type="InterPro" id="IPR011130">
    <property type="entry name" value="SecA_preprotein_X-link_dom"/>
</dbReference>
<dbReference type="InterPro" id="IPR044722">
    <property type="entry name" value="SecA_SF2_C"/>
</dbReference>
<dbReference type="InterPro" id="IPR011116">
    <property type="entry name" value="SecA_Wing/Scaffold"/>
</dbReference>
<dbReference type="InterPro" id="IPR036266">
    <property type="entry name" value="SecA_Wing/Scaffold_sf"/>
</dbReference>
<dbReference type="InterPro" id="IPR036670">
    <property type="entry name" value="SecA_X-link_sf"/>
</dbReference>
<dbReference type="NCBIfam" id="TIGR00963">
    <property type="entry name" value="secA"/>
    <property type="match status" value="1"/>
</dbReference>
<dbReference type="PANTHER" id="PTHR30612:SF0">
    <property type="entry name" value="CHLOROPLAST PROTEIN-TRANSPORTING ATPASE"/>
    <property type="match status" value="1"/>
</dbReference>
<dbReference type="PANTHER" id="PTHR30612">
    <property type="entry name" value="SECA INNER MEMBRANE COMPONENT OF SEC PROTEIN SECRETION SYSTEM"/>
    <property type="match status" value="1"/>
</dbReference>
<dbReference type="Pfam" id="PF21090">
    <property type="entry name" value="P-loop_SecA"/>
    <property type="match status" value="1"/>
</dbReference>
<dbReference type="Pfam" id="PF07517">
    <property type="entry name" value="SecA_DEAD"/>
    <property type="match status" value="1"/>
</dbReference>
<dbReference type="Pfam" id="PF01043">
    <property type="entry name" value="SecA_PP_bind"/>
    <property type="match status" value="1"/>
</dbReference>
<dbReference type="Pfam" id="PF07516">
    <property type="entry name" value="SecA_SW"/>
    <property type="match status" value="1"/>
</dbReference>
<dbReference type="PRINTS" id="PR00906">
    <property type="entry name" value="SECA"/>
</dbReference>
<dbReference type="SMART" id="SM00957">
    <property type="entry name" value="SecA_DEAD"/>
    <property type="match status" value="1"/>
</dbReference>
<dbReference type="SMART" id="SM00958">
    <property type="entry name" value="SecA_PP_bind"/>
    <property type="match status" value="1"/>
</dbReference>
<dbReference type="SUPFAM" id="SSF81886">
    <property type="entry name" value="Helical scaffold and wing domains of SecA"/>
    <property type="match status" value="1"/>
</dbReference>
<dbReference type="SUPFAM" id="SSF52540">
    <property type="entry name" value="P-loop containing nucleoside triphosphate hydrolases"/>
    <property type="match status" value="2"/>
</dbReference>
<dbReference type="SUPFAM" id="SSF81767">
    <property type="entry name" value="Pre-protein crosslinking domain of SecA"/>
    <property type="match status" value="1"/>
</dbReference>
<dbReference type="PROSITE" id="PS01312">
    <property type="entry name" value="SECA"/>
    <property type="match status" value="1"/>
</dbReference>
<dbReference type="PROSITE" id="PS51196">
    <property type="entry name" value="SECA_MOTOR_DEAD"/>
    <property type="match status" value="1"/>
</dbReference>
<keyword id="KW-0067">ATP-binding</keyword>
<keyword id="KW-0997">Cell inner membrane</keyword>
<keyword id="KW-1003">Cell membrane</keyword>
<keyword id="KW-0963">Cytoplasm</keyword>
<keyword id="KW-0472">Membrane</keyword>
<keyword id="KW-0547">Nucleotide-binding</keyword>
<keyword id="KW-0653">Protein transport</keyword>
<keyword id="KW-1185">Reference proteome</keyword>
<keyword id="KW-1278">Translocase</keyword>
<keyword id="KW-0811">Translocation</keyword>
<keyword id="KW-0813">Transport</keyword>
<feature type="chain" id="PRO_0000109584" description="Protein translocase subunit SecA">
    <location>
        <begin position="1"/>
        <end position="969"/>
    </location>
</feature>
<feature type="binding site" evidence="1">
    <location>
        <position position="99"/>
    </location>
    <ligand>
        <name>ATP</name>
        <dbReference type="ChEBI" id="CHEBI:30616"/>
    </ligand>
</feature>
<feature type="binding site" evidence="1">
    <location>
        <begin position="117"/>
        <end position="121"/>
    </location>
    <ligand>
        <name>ATP</name>
        <dbReference type="ChEBI" id="CHEBI:30616"/>
    </ligand>
</feature>
<feature type="binding site" evidence="1">
    <location>
        <position position="631"/>
    </location>
    <ligand>
        <name>ATP</name>
        <dbReference type="ChEBI" id="CHEBI:30616"/>
    </ligand>
</feature>
<evidence type="ECO:0000255" key="1">
    <source>
        <dbReference type="HAMAP-Rule" id="MF_01382"/>
    </source>
</evidence>
<reference key="1">
    <citation type="journal article" date="1998" name="Science">
        <title>Genome sequence of an obligate intracellular pathogen of humans: Chlamydia trachomatis.</title>
        <authorList>
            <person name="Stephens R.S."/>
            <person name="Kalman S."/>
            <person name="Lammel C.J."/>
            <person name="Fan J."/>
            <person name="Marathe R."/>
            <person name="Aravind L."/>
            <person name="Mitchell W.P."/>
            <person name="Olinger L."/>
            <person name="Tatusov R.L."/>
            <person name="Zhao Q."/>
            <person name="Koonin E.V."/>
            <person name="Davis R.W."/>
        </authorList>
    </citation>
    <scope>NUCLEOTIDE SEQUENCE [LARGE SCALE GENOMIC DNA]</scope>
    <source>
        <strain>ATCC VR-885 / DSM 19411 / UW-3/Cx</strain>
    </source>
</reference>
<gene>
    <name evidence="1" type="primary">secA</name>
    <name type="ordered locus">CT_701</name>
</gene>
<organism>
    <name type="scientific">Chlamydia trachomatis serovar D (strain ATCC VR-885 / DSM 19411 / UW-3/Cx)</name>
    <dbReference type="NCBI Taxonomy" id="272561"/>
    <lineage>
        <taxon>Bacteria</taxon>
        <taxon>Pseudomonadati</taxon>
        <taxon>Chlamydiota</taxon>
        <taxon>Chlamydiia</taxon>
        <taxon>Chlamydiales</taxon>
        <taxon>Chlamydiaceae</taxon>
        <taxon>Chlamydia/Chlamydophila group</taxon>
        <taxon>Chlamydia</taxon>
    </lineage>
</organism>
<comment type="function">
    <text evidence="1">Part of the Sec protein translocase complex. Interacts with the SecYEG preprotein conducting channel. Has a central role in coupling the hydrolysis of ATP to the transfer of proteins into and across the cell membrane, serving as an ATP-driven molecular motor driving the stepwise translocation of polypeptide chains across the membrane.</text>
</comment>
<comment type="catalytic activity">
    <reaction evidence="1">
        <text>ATP + H2O + cellular proteinSide 1 = ADP + phosphate + cellular proteinSide 2.</text>
        <dbReference type="EC" id="7.4.2.8"/>
    </reaction>
</comment>
<comment type="subunit">
    <text evidence="1">Monomer and homodimer. Part of the essential Sec protein translocation apparatus which comprises SecA, SecYEG and auxiliary proteins SecDF. Other proteins may also be involved.</text>
</comment>
<comment type="subcellular location">
    <subcellularLocation>
        <location evidence="1">Cell inner membrane</location>
        <topology evidence="1">Peripheral membrane protein</topology>
        <orientation evidence="1">Cytoplasmic side</orientation>
    </subcellularLocation>
    <subcellularLocation>
        <location evidence="1">Cytoplasm</location>
    </subcellularLocation>
    <text evidence="1">Distribution is 50-50.</text>
</comment>
<comment type="similarity">
    <text evidence="1">Belongs to the SecA family.</text>
</comment>
<sequence length="969" mass="110358">MMDFLKRFFGSSQERILKRFQKLVEEVNACDEKFSSLSDDELRKKTPQLKQRYQDGESLDKLLPEAYGVVKNVCRRLAGTPVEVSGYHQQWDMVPYDVQILGAIAMHKGFITEMQTGEGKTLTAVMPLYLNALTGKPVHLVTVNDYLAQRDCEWVGSVLRWLGLTTGVLVSGSPPEKRKAIYQCDVVYGTASEFGFDYLRDNSIATRKEEQVGRGFYFAIIDEIDSVLIDEARTPLIISGPGEKHNPVYFELKDRVAELVYFQREMCNHIAIEARKVLDPFLGTDVLPKDKKVVEAISEACRALWLVSKGMPLNRVLRRVREHPDLRAMIDKWDVFYHAEQNKEQCLEKLSSLYIVVDEHNNDFELTDKGMLQWIEKIGGAAEDFVMMDMGHEYALIEEDATLSPADKLNRKIAVSEKDTQRKARAHGLRQLLRAHLLMEKDIDYIVRDDQIVIIDEHTGRPQSGRRFSEGLHQAIEAKEHVTIRKESQTFATVTLQNFFRLYEKLAGMTGTAITESREFKEIYSLYVLQVPTFKPCLRIDHNDAFYMTEREKYQAIVAEIISAHRSGKPILIGTESVEVSEKLSRILRQNRINHTVLNAKNHAQEAEIIAGAGKVGAVTVATNMAGRGTDIKLDEEAVAAGGLYVIGTSRHQSRRIDRQLRGRCARLGDPGAAKFFLSFEDRLMRLFASPKLNTLIRHFRPPEGEAMSDPMFDRLIETAQKRVEGRNYTIRKHTLEYDDVMNKQRQTIYAFRNDVLHAEDLFVVAKEQIEHVALALAFLILKDAHADHCSLPKIEEWLSYSFPVKLDDQEIRRLGDVDAVADYIGDLLIEAFDVKFSAMLAEFTEIIGSAANAQGICNDILRSVIISHIDEEWKVHLVDMDLLRSEVGLRSVGQKDPLIEFKNESFLLFEGLIRDIRIAIVKHLFALELSLTRSDRPDNAIPTVATAFHNHDNFRPMELTIVGEEEES</sequence>
<accession>O84707</accession>
<proteinExistence type="inferred from homology"/>